<protein>
    <recommendedName>
        <fullName evidence="1">Thiamine thiazole synthase</fullName>
        <ecNumber evidence="1">2.4.2.59</ecNumber>
    </recommendedName>
</protein>
<organism>
    <name type="scientific">Saccharolobus islandicus (strain Y.N.15.51 / Yellowstone #2)</name>
    <name type="common">Sulfolobus islandicus</name>
    <dbReference type="NCBI Taxonomy" id="419942"/>
    <lineage>
        <taxon>Archaea</taxon>
        <taxon>Thermoproteota</taxon>
        <taxon>Thermoprotei</taxon>
        <taxon>Sulfolobales</taxon>
        <taxon>Sulfolobaceae</taxon>
        <taxon>Saccharolobus</taxon>
    </lineage>
</organism>
<accession>C3NGI6</accession>
<comment type="function">
    <text evidence="1">Involved in the biosynthesis of the thiazole moiety of thiamine. Catalyzes the conversion of NAD and glycine to adenosine diphosphate 5-(2-hydroxyethyl)-4-methylthiazole-2-carboxylate (ADT), an adenylated thiazole intermediate, using free sulfide as a source of sulfur.</text>
</comment>
<comment type="catalytic activity">
    <reaction evidence="1">
        <text>hydrogen sulfide + glycine + NAD(+) = ADP-5-ethyl-4-methylthiazole-2-carboxylate + nicotinamide + 3 H2O + H(+)</text>
        <dbReference type="Rhea" id="RHEA:55704"/>
        <dbReference type="ChEBI" id="CHEBI:15377"/>
        <dbReference type="ChEBI" id="CHEBI:15378"/>
        <dbReference type="ChEBI" id="CHEBI:17154"/>
        <dbReference type="ChEBI" id="CHEBI:29919"/>
        <dbReference type="ChEBI" id="CHEBI:57305"/>
        <dbReference type="ChEBI" id="CHEBI:57540"/>
        <dbReference type="ChEBI" id="CHEBI:139151"/>
        <dbReference type="EC" id="2.4.2.59"/>
    </reaction>
</comment>
<comment type="cofactor">
    <cofactor evidence="1">
        <name>Fe(2+)</name>
        <dbReference type="ChEBI" id="CHEBI:29033"/>
    </cofactor>
</comment>
<comment type="pathway">
    <text evidence="1">Cofactor biosynthesis; thiamine diphosphate biosynthesis.</text>
</comment>
<comment type="subunit">
    <text evidence="1">Homooctamer; tetramer of dimers.</text>
</comment>
<comment type="similarity">
    <text evidence="1">Belongs to the THI4 family.</text>
</comment>
<proteinExistence type="inferred from homology"/>
<name>THI4_SACI1</name>
<gene>
    <name evidence="1" type="primary">thi4</name>
    <name type="ordered locus">YN1551_1140</name>
</gene>
<sequence length="267" mass="28662">MEVKIKQVDEVKISRYIIKETMEDWYQFVESDVVIVGAGPSGLSAAYYLAKAGLKTLVFERRLSFGGGIGGGAMLFHKLIIEKPADEILREVNVRLKEVEEGVYVVDSAEFMAKLATAAIDAGAKIIHGVTVDDVIFRENPLRVAGVAVEWTATQMASLHVDPIFISAKAVVDATGHDAEVISVAARKIPELGIVIAGEKSAYSERAEELTVINTGKVAEGLYAAGMAVTEVKGLPRMGPIFGAMVLSGKAVAEEITKDLLKSEIRT</sequence>
<reference key="1">
    <citation type="journal article" date="2009" name="Proc. Natl. Acad. Sci. U.S.A.">
        <title>Biogeography of the Sulfolobus islandicus pan-genome.</title>
        <authorList>
            <person name="Reno M.L."/>
            <person name="Held N.L."/>
            <person name="Fields C.J."/>
            <person name="Burke P.V."/>
            <person name="Whitaker R.J."/>
        </authorList>
    </citation>
    <scope>NUCLEOTIDE SEQUENCE [LARGE SCALE GENOMIC DNA]</scope>
    <source>
        <strain>Y.N.15.51 / Yellowstone #2</strain>
    </source>
</reference>
<dbReference type="EC" id="2.4.2.59" evidence="1"/>
<dbReference type="EMBL" id="CP001404">
    <property type="protein sequence ID" value="ACP48246.1"/>
    <property type="molecule type" value="Genomic_DNA"/>
</dbReference>
<dbReference type="RefSeq" id="WP_012717351.1">
    <property type="nucleotide sequence ID" value="NC_012623.1"/>
</dbReference>
<dbReference type="SMR" id="C3NGI6"/>
<dbReference type="GeneID" id="7810000"/>
<dbReference type="KEGG" id="sin:YN1551_1140"/>
<dbReference type="HOGENOM" id="CLU_053727_2_0_2"/>
<dbReference type="UniPathway" id="UPA00060"/>
<dbReference type="Proteomes" id="UP000006818">
    <property type="component" value="Chromosome"/>
</dbReference>
<dbReference type="GO" id="GO:0005506">
    <property type="term" value="F:iron ion binding"/>
    <property type="evidence" value="ECO:0007669"/>
    <property type="project" value="UniProtKB-UniRule"/>
</dbReference>
<dbReference type="GO" id="GO:0016763">
    <property type="term" value="F:pentosyltransferase activity"/>
    <property type="evidence" value="ECO:0007669"/>
    <property type="project" value="UniProtKB-UniRule"/>
</dbReference>
<dbReference type="GO" id="GO:0009228">
    <property type="term" value="P:thiamine biosynthetic process"/>
    <property type="evidence" value="ECO:0007669"/>
    <property type="project" value="UniProtKB-KW"/>
</dbReference>
<dbReference type="GO" id="GO:0009229">
    <property type="term" value="P:thiamine diphosphate biosynthetic process"/>
    <property type="evidence" value="ECO:0007669"/>
    <property type="project" value="UniProtKB-UniRule"/>
</dbReference>
<dbReference type="GO" id="GO:0052837">
    <property type="term" value="P:thiazole biosynthetic process"/>
    <property type="evidence" value="ECO:0007669"/>
    <property type="project" value="UniProtKB-UniRule"/>
</dbReference>
<dbReference type="Gene3D" id="3.50.50.60">
    <property type="entry name" value="FAD/NAD(P)-binding domain"/>
    <property type="match status" value="1"/>
</dbReference>
<dbReference type="HAMAP" id="MF_00304">
    <property type="entry name" value="Thi4"/>
    <property type="match status" value="1"/>
</dbReference>
<dbReference type="InterPro" id="IPR036188">
    <property type="entry name" value="FAD/NAD-bd_sf"/>
</dbReference>
<dbReference type="InterPro" id="IPR002922">
    <property type="entry name" value="Thi4_fam"/>
</dbReference>
<dbReference type="InterPro" id="IPR022828">
    <property type="entry name" value="Thi4_prok"/>
</dbReference>
<dbReference type="NCBIfam" id="TIGR00292">
    <property type="entry name" value="sulfide-dependent adenosine diphosphate thiazole synthase"/>
    <property type="match status" value="1"/>
</dbReference>
<dbReference type="PANTHER" id="PTHR43422">
    <property type="entry name" value="THIAMINE THIAZOLE SYNTHASE"/>
    <property type="match status" value="1"/>
</dbReference>
<dbReference type="PANTHER" id="PTHR43422:SF3">
    <property type="entry name" value="THIAMINE THIAZOLE SYNTHASE"/>
    <property type="match status" value="1"/>
</dbReference>
<dbReference type="Pfam" id="PF01946">
    <property type="entry name" value="Thi4"/>
    <property type="match status" value="1"/>
</dbReference>
<dbReference type="PRINTS" id="PR00368">
    <property type="entry name" value="FADPNR"/>
</dbReference>
<dbReference type="PRINTS" id="PR00411">
    <property type="entry name" value="PNDRDTASEI"/>
</dbReference>
<dbReference type="SUPFAM" id="SSF51905">
    <property type="entry name" value="FAD/NAD(P)-binding domain"/>
    <property type="match status" value="1"/>
</dbReference>
<keyword id="KW-0408">Iron</keyword>
<keyword id="KW-0479">Metal-binding</keyword>
<keyword id="KW-0520">NAD</keyword>
<keyword id="KW-0784">Thiamine biosynthesis</keyword>
<keyword id="KW-0808">Transferase</keyword>
<feature type="chain" id="PRO_1000205009" description="Thiamine thiazole synthase">
    <location>
        <begin position="1"/>
        <end position="267"/>
    </location>
</feature>
<feature type="binding site" description="in other chain" evidence="1">
    <location>
        <position position="41"/>
    </location>
    <ligand>
        <name>NAD(+)</name>
        <dbReference type="ChEBI" id="CHEBI:57540"/>
        <note>ligand shared between two adjacent protomers</note>
    </ligand>
</feature>
<feature type="binding site" description="in other chain" evidence="1">
    <location>
        <begin position="60"/>
        <end position="61"/>
    </location>
    <ligand>
        <name>NAD(+)</name>
        <dbReference type="ChEBI" id="CHEBI:57540"/>
        <note>ligand shared between two adjacent protomers</note>
    </ligand>
</feature>
<feature type="binding site" description="in other chain" evidence="1">
    <location>
        <position position="68"/>
    </location>
    <ligand>
        <name>NAD(+)</name>
        <dbReference type="ChEBI" id="CHEBI:57540"/>
        <note>ligand shared between two adjacent protomers</note>
    </ligand>
</feature>
<feature type="binding site" description="in other chain" evidence="1">
    <location>
        <position position="132"/>
    </location>
    <ligand>
        <name>NAD(+)</name>
        <dbReference type="ChEBI" id="CHEBI:57540"/>
        <note>ligand shared between two adjacent protomers</note>
    </ligand>
</feature>
<feature type="binding site" evidence="1">
    <location>
        <begin position="160"/>
        <end position="162"/>
    </location>
    <ligand>
        <name>NAD(+)</name>
        <dbReference type="ChEBI" id="CHEBI:57540"/>
        <note>ligand shared between two adjacent protomers</note>
    </ligand>
</feature>
<feature type="binding site" evidence="1">
    <location>
        <position position="162"/>
    </location>
    <ligand>
        <name>Fe cation</name>
        <dbReference type="ChEBI" id="CHEBI:24875"/>
        <note>ligand shared between two adjacent protomers</note>
    </ligand>
</feature>
<feature type="binding site" description="in other chain" evidence="1">
    <location>
        <position position="177"/>
    </location>
    <ligand>
        <name>Fe cation</name>
        <dbReference type="ChEBI" id="CHEBI:24875"/>
        <note>ligand shared between two adjacent protomers</note>
    </ligand>
</feature>
<feature type="binding site" description="in other chain" evidence="1">
    <location>
        <position position="227"/>
    </location>
    <ligand>
        <name>NAD(+)</name>
        <dbReference type="ChEBI" id="CHEBI:57540"/>
        <note>ligand shared between two adjacent protomers</note>
    </ligand>
</feature>
<feature type="binding site" evidence="1">
    <location>
        <position position="237"/>
    </location>
    <ligand>
        <name>glycine</name>
        <dbReference type="ChEBI" id="CHEBI:57305"/>
    </ligand>
</feature>
<evidence type="ECO:0000255" key="1">
    <source>
        <dbReference type="HAMAP-Rule" id="MF_00304"/>
    </source>
</evidence>